<accession>P25684</accession>
<reference key="1">
    <citation type="journal article" date="1980" name="Biochim. Biophys. Acta">
        <title>The complete primary structures of two reduced and S-carboxymethylated Angusticeps-type toxins from Dendroaspis angusticeps (green mamba) venom.</title>
        <authorList>
            <person name="Joubert F.J."/>
            <person name="Taljaard N."/>
        </authorList>
    </citation>
    <scope>PROTEIN SEQUENCE</scope>
    <scope>TOXIC DOSE</scope>
    <scope>SUBCELLULAR LOCATION</scope>
    <source>
        <tissue>Venom</tissue>
    </source>
</reference>
<keyword id="KW-0108">Calcium channel impairing toxin</keyword>
<keyword id="KW-0123">Cardiotoxin</keyword>
<keyword id="KW-0903">Direct protein sequencing</keyword>
<keyword id="KW-1015">Disulfide bond</keyword>
<keyword id="KW-0872">Ion channel impairing toxin</keyword>
<keyword id="KW-0964">Secreted</keyword>
<keyword id="KW-0800">Toxin</keyword>
<keyword id="KW-1218">Voltage-gated calcium channel impairing toxin</keyword>
<dbReference type="SMR" id="P25684"/>
<dbReference type="GO" id="GO:0005576">
    <property type="term" value="C:extracellular region"/>
    <property type="evidence" value="ECO:0007669"/>
    <property type="project" value="UniProtKB-SubCell"/>
</dbReference>
<dbReference type="GO" id="GO:0005246">
    <property type="term" value="F:calcium channel regulator activity"/>
    <property type="evidence" value="ECO:0007669"/>
    <property type="project" value="UniProtKB-KW"/>
</dbReference>
<dbReference type="GO" id="GO:0090729">
    <property type="term" value="F:toxin activity"/>
    <property type="evidence" value="ECO:0007669"/>
    <property type="project" value="UniProtKB-KW"/>
</dbReference>
<dbReference type="CDD" id="cd00206">
    <property type="entry name" value="TFP_snake_toxin"/>
    <property type="match status" value="1"/>
</dbReference>
<dbReference type="Gene3D" id="2.10.60.10">
    <property type="entry name" value="CD59"/>
    <property type="match status" value="1"/>
</dbReference>
<dbReference type="InterPro" id="IPR003571">
    <property type="entry name" value="Snake_3FTx"/>
</dbReference>
<dbReference type="InterPro" id="IPR045860">
    <property type="entry name" value="Snake_toxin-like_sf"/>
</dbReference>
<dbReference type="InterPro" id="IPR018354">
    <property type="entry name" value="Snake_toxin_con_site"/>
</dbReference>
<dbReference type="InterPro" id="IPR054131">
    <property type="entry name" value="Toxin_cobra-type"/>
</dbReference>
<dbReference type="Pfam" id="PF21947">
    <property type="entry name" value="Toxin_cobra-type"/>
    <property type="match status" value="1"/>
</dbReference>
<dbReference type="SUPFAM" id="SSF57302">
    <property type="entry name" value="Snake toxin-like"/>
    <property type="match status" value="1"/>
</dbReference>
<dbReference type="PROSITE" id="PS00272">
    <property type="entry name" value="SNAKE_TOXIN"/>
    <property type="match status" value="1"/>
</dbReference>
<name>3SL2_DENAN</name>
<comment type="function">
    <text evidence="1">This specific blocker of the L-type calcium channel (Cav1/CACNA1) is a smooth muscle relaxant and an inhibitor of cardiac contractions.</text>
</comment>
<comment type="subcellular location">
    <subcellularLocation>
        <location evidence="3">Secreted</location>
    </subcellularLocation>
</comment>
<comment type="tissue specificity">
    <text evidence="4">Expressed by the venom gland.</text>
</comment>
<comment type="toxic dose">
    <text evidence="3">LD(50) is 23 +/- 3 mg/kg by intravenous injection.</text>
</comment>
<comment type="similarity">
    <text evidence="4">Belongs to the three-finger toxin family. Short-chain subfamily. L-type calcium blocker sub-subfamily.</text>
</comment>
<evidence type="ECO:0000250" key="1">
    <source>
        <dbReference type="UniProtKB" id="P01414"/>
    </source>
</evidence>
<evidence type="ECO:0000250" key="2">
    <source>
        <dbReference type="UniProtKB" id="P0C1Z0"/>
    </source>
</evidence>
<evidence type="ECO:0000269" key="3">
    <source>
    </source>
</evidence>
<evidence type="ECO:0000305" key="4"/>
<organism>
    <name type="scientific">Dendroaspis angusticeps</name>
    <name type="common">Eastern green mamba</name>
    <name type="synonym">Naja angusticeps</name>
    <dbReference type="NCBI Taxonomy" id="8618"/>
    <lineage>
        <taxon>Eukaryota</taxon>
        <taxon>Metazoa</taxon>
        <taxon>Chordata</taxon>
        <taxon>Craniata</taxon>
        <taxon>Vertebrata</taxon>
        <taxon>Euteleostomi</taxon>
        <taxon>Lepidosauria</taxon>
        <taxon>Squamata</taxon>
        <taxon>Bifurcata</taxon>
        <taxon>Unidentata</taxon>
        <taxon>Episquamata</taxon>
        <taxon>Toxicofera</taxon>
        <taxon>Serpentes</taxon>
        <taxon>Colubroidea</taxon>
        <taxon>Elapidae</taxon>
        <taxon>Elapinae</taxon>
        <taxon>Dendroaspis</taxon>
    </lineage>
</organism>
<sequence>RICYSHKASLPRATKTCVENSCYKMFIRTSPDYISDRGCGCPTAMWPYQTACCKGDRCNK</sequence>
<protein>
    <recommendedName>
        <fullName>Toxin C10S2C2</fullName>
    </recommendedName>
</protein>
<feature type="chain" id="PRO_0000093665" description="Toxin C10S2C2" evidence="3">
    <location>
        <begin position="1"/>
        <end position="60"/>
    </location>
</feature>
<feature type="region of interest" description="Important for binding to L-type calcium channels" evidence="1">
    <location>
        <begin position="41"/>
        <end position="48"/>
    </location>
</feature>
<feature type="disulfide bond" evidence="2">
    <location>
        <begin position="3"/>
        <end position="22"/>
    </location>
</feature>
<feature type="disulfide bond" evidence="2">
    <location>
        <begin position="17"/>
        <end position="39"/>
    </location>
</feature>
<feature type="disulfide bond" evidence="2">
    <location>
        <begin position="41"/>
        <end position="52"/>
    </location>
</feature>
<feature type="disulfide bond" evidence="2">
    <location>
        <begin position="53"/>
        <end position="58"/>
    </location>
</feature>
<proteinExistence type="evidence at protein level"/>